<protein>
    <recommendedName>
        <fullName evidence="7">Transcription factor Sox-9-B</fullName>
    </recommendedName>
</protein>
<evidence type="ECO:0000250" key="1">
    <source>
        <dbReference type="UniProtKB" id="B7ZR65"/>
    </source>
</evidence>
<evidence type="ECO:0000250" key="2">
    <source>
        <dbReference type="UniProtKB" id="P48436"/>
    </source>
</evidence>
<evidence type="ECO:0000250" key="3">
    <source>
        <dbReference type="UniProtKB" id="Q04887"/>
    </source>
</evidence>
<evidence type="ECO:0000250" key="4">
    <source>
        <dbReference type="UniProtKB" id="Q6F2E7"/>
    </source>
</evidence>
<evidence type="ECO:0000255" key="5">
    <source>
        <dbReference type="PROSITE-ProRule" id="PRU00267"/>
    </source>
</evidence>
<evidence type="ECO:0000256" key="6">
    <source>
        <dbReference type="SAM" id="MobiDB-lite"/>
    </source>
</evidence>
<evidence type="ECO:0000305" key="7"/>
<evidence type="ECO:0000312" key="8">
    <source>
        <dbReference type="EMBL" id="AAH76783.1"/>
    </source>
</evidence>
<evidence type="ECO:0000312" key="9">
    <source>
        <dbReference type="EMBL" id="BAG48176.1"/>
    </source>
</evidence>
<organism>
    <name type="scientific">Xenopus laevis</name>
    <name type="common">African clawed frog</name>
    <dbReference type="NCBI Taxonomy" id="8355"/>
    <lineage>
        <taxon>Eukaryota</taxon>
        <taxon>Metazoa</taxon>
        <taxon>Chordata</taxon>
        <taxon>Craniata</taxon>
        <taxon>Vertebrata</taxon>
        <taxon>Euteleostomi</taxon>
        <taxon>Amphibia</taxon>
        <taxon>Batrachia</taxon>
        <taxon>Anura</taxon>
        <taxon>Pipoidea</taxon>
        <taxon>Pipidae</taxon>
        <taxon>Xenopodinae</taxon>
        <taxon>Xenopus</taxon>
        <taxon>Xenopus</taxon>
    </lineage>
</organism>
<sequence length="476" mass="53320">MNLLDPFMKMSEEQDKCLSGAPSPTMSEDSAGSPCPSGSGSDTENTRPQENTFPKGDQEMKKETEDEKFPVCIREAVSQVLKGYDWTLVPMPVRVNGSSKNKPHVKRPMNAFMVWAQAARRKLADQYPHLHNAELSKTLGKLWRLLNEGEKRPFVEEAERLRVQHKKDHPDYKYQPRRRKSVKNGQSEQDDSAEQTHISPNAIFKALQADSPHSTSSMSEVHSPGEHSGQSQGPPTPPTTPKTDVQPGKPDLKREGRPLQESGRQPPHIDFRDVDIGELSSEVISTIETFDVNEFDQYLPPNGHPGVGSAQAPYTGSYGISSTPSATTGAGSAWMSKQQQQPQQHSLSTINSEQSQSQQRTHIKTEQLSPSHYSDQQQQHSPQQLNYSSFNLQHYSSSYPTITRAQYDYTEHQGSNSYYTHASGQNSGLYSNFTYMNPSQRPMYTPIADTTGVPSIPQTHSPQHWEQPVYTQLTRP</sequence>
<gene>
    <name type="primary">sox9-b</name>
    <name type="synonym">sox9</name>
    <name evidence="8" type="synonym">sox9b</name>
</gene>
<keyword id="KW-0010">Activator</keyword>
<keyword id="KW-0891">Chondrogenesis</keyword>
<keyword id="KW-0963">Cytoplasm</keyword>
<keyword id="KW-0217">Developmental protein</keyword>
<keyword id="KW-0221">Differentiation</keyword>
<keyword id="KW-0238">DNA-binding</keyword>
<keyword id="KW-0334">Gonadal differentiation</keyword>
<keyword id="KW-1017">Isopeptide bond</keyword>
<keyword id="KW-0539">Nucleus</keyword>
<keyword id="KW-1185">Reference proteome</keyword>
<keyword id="KW-0804">Transcription</keyword>
<keyword id="KW-0805">Transcription regulation</keyword>
<keyword id="KW-0832">Ubl conjugation</keyword>
<reference evidence="9" key="1">
    <citation type="submission" date="2008-06" db="EMBL/GenBank/DDBJ databases">
        <title>Xenopus laevis Sox9b.</title>
        <authorList>
            <person name="Yoshimoto S."/>
        </authorList>
    </citation>
    <scope>NUCLEOTIDE SEQUENCE [MRNA]</scope>
    <source>
        <tissue evidence="9">Testis</tissue>
    </source>
</reference>
<reference evidence="9" key="2">
    <citation type="submission" date="2004-07" db="EMBL/GenBank/DDBJ databases">
        <authorList>
            <consortium name="NIH - Xenopus Gene Collection (XGC) project"/>
        </authorList>
    </citation>
    <scope>NUCLEOTIDE SEQUENCE [LARGE SCALE MRNA]</scope>
    <source>
        <tissue evidence="8">Oocyte</tissue>
    </source>
</reference>
<reference evidence="7" key="3">
    <citation type="journal article" date="2008" name="Chromosome Res.">
        <title>Diversity in the origins of sex chromosomes in anurans inferred from comparative mapping of sexual differentiation genes for three species of the Raninae and Xenopodinae.</title>
        <authorList>
            <person name="Uno Y."/>
            <person name="Nishida C."/>
            <person name="Yoshimoto S."/>
            <person name="Ito M."/>
            <person name="Oshima Y."/>
            <person name="Yokoyama S."/>
            <person name="Nakamura M."/>
            <person name="Matsuda Y."/>
        </authorList>
    </citation>
    <scope>IDENTIFICATION</scope>
</reference>
<dbReference type="EMBL" id="AB439583">
    <property type="protein sequence ID" value="BAG48176.1"/>
    <property type="molecule type" value="mRNA"/>
</dbReference>
<dbReference type="EMBL" id="BC076783">
    <property type="protein sequence ID" value="AAH76783.1"/>
    <property type="molecule type" value="mRNA"/>
</dbReference>
<dbReference type="RefSeq" id="NP_001087942.1">
    <property type="nucleotide sequence ID" value="NM_001094473.1"/>
</dbReference>
<dbReference type="SMR" id="Q6DFF5"/>
<dbReference type="DNASU" id="494585"/>
<dbReference type="GeneID" id="494585"/>
<dbReference type="KEGG" id="xla:494585"/>
<dbReference type="AGR" id="Xenbase:XB-GENE-1034775"/>
<dbReference type="CTD" id="494585"/>
<dbReference type="Xenbase" id="XB-GENE-1034775">
    <property type="gene designation" value="sox9.L"/>
</dbReference>
<dbReference type="OrthoDB" id="6247875at2759"/>
<dbReference type="Proteomes" id="UP000186698">
    <property type="component" value="Chromosome 9_10L"/>
</dbReference>
<dbReference type="Bgee" id="494585">
    <property type="expression patterns" value="Expressed in internal ear and 17 other cell types or tissues"/>
</dbReference>
<dbReference type="GO" id="GO:0005737">
    <property type="term" value="C:cytoplasm"/>
    <property type="evidence" value="ECO:0000250"/>
    <property type="project" value="UniProtKB"/>
</dbReference>
<dbReference type="GO" id="GO:0005634">
    <property type="term" value="C:nucleus"/>
    <property type="evidence" value="ECO:0000250"/>
    <property type="project" value="UniProtKB"/>
</dbReference>
<dbReference type="GO" id="GO:0000981">
    <property type="term" value="F:DNA-binding transcription factor activity, RNA polymerase II-specific"/>
    <property type="evidence" value="ECO:0000318"/>
    <property type="project" value="GO_Central"/>
</dbReference>
<dbReference type="GO" id="GO:0000978">
    <property type="term" value="F:RNA polymerase II cis-regulatory region sequence-specific DNA binding"/>
    <property type="evidence" value="ECO:0000318"/>
    <property type="project" value="GO_Central"/>
</dbReference>
<dbReference type="GO" id="GO:0044389">
    <property type="term" value="F:ubiquitin-like protein ligase binding"/>
    <property type="evidence" value="ECO:0000250"/>
    <property type="project" value="UniProtKB"/>
</dbReference>
<dbReference type="GO" id="GO:0051216">
    <property type="term" value="P:cartilage development"/>
    <property type="evidence" value="ECO:0000250"/>
    <property type="project" value="UniProtKB"/>
</dbReference>
<dbReference type="GO" id="GO:0002062">
    <property type="term" value="P:chondrocyte differentiation"/>
    <property type="evidence" value="ECO:0000318"/>
    <property type="project" value="GO_Central"/>
</dbReference>
<dbReference type="GO" id="GO:0007506">
    <property type="term" value="P:gonadal mesoderm development"/>
    <property type="evidence" value="ECO:0007669"/>
    <property type="project" value="UniProtKB-KW"/>
</dbReference>
<dbReference type="GO" id="GO:0007507">
    <property type="term" value="P:heart development"/>
    <property type="evidence" value="ECO:0000318"/>
    <property type="project" value="GO_Central"/>
</dbReference>
<dbReference type="GO" id="GO:0002009">
    <property type="term" value="P:morphogenesis of an epithelium"/>
    <property type="evidence" value="ECO:0000318"/>
    <property type="project" value="GO_Central"/>
</dbReference>
<dbReference type="GO" id="GO:0000122">
    <property type="term" value="P:negative regulation of transcription by RNA polymerase II"/>
    <property type="evidence" value="ECO:0000318"/>
    <property type="project" value="GO_Central"/>
</dbReference>
<dbReference type="GO" id="GO:0014029">
    <property type="term" value="P:neural crest formation"/>
    <property type="evidence" value="ECO:0000250"/>
    <property type="project" value="UniProtKB"/>
</dbReference>
<dbReference type="GO" id="GO:0048709">
    <property type="term" value="P:oligodendrocyte differentiation"/>
    <property type="evidence" value="ECO:0000318"/>
    <property type="project" value="GO_Central"/>
</dbReference>
<dbReference type="GO" id="GO:0043049">
    <property type="term" value="P:otic placode formation"/>
    <property type="evidence" value="ECO:0000250"/>
    <property type="project" value="UniProtKB"/>
</dbReference>
<dbReference type="GO" id="GO:0032332">
    <property type="term" value="P:positive regulation of chondrocyte differentiation"/>
    <property type="evidence" value="ECO:0000318"/>
    <property type="project" value="GO_Central"/>
</dbReference>
<dbReference type="GO" id="GO:0045893">
    <property type="term" value="P:positive regulation of DNA-templated transcription"/>
    <property type="evidence" value="ECO:0000250"/>
    <property type="project" value="UniProtKB"/>
</dbReference>
<dbReference type="GO" id="GO:0045944">
    <property type="term" value="P:positive regulation of transcription by RNA polymerase II"/>
    <property type="evidence" value="ECO:0000250"/>
    <property type="project" value="UniProtKB"/>
</dbReference>
<dbReference type="CDD" id="cd22031">
    <property type="entry name" value="HMG-box_SoxE"/>
    <property type="match status" value="1"/>
</dbReference>
<dbReference type="FunFam" id="1.10.30.10:FF:000004">
    <property type="entry name" value="Transcription factor SOX-10"/>
    <property type="match status" value="1"/>
</dbReference>
<dbReference type="Gene3D" id="1.10.30.10">
    <property type="entry name" value="High mobility group box domain"/>
    <property type="match status" value="1"/>
</dbReference>
<dbReference type="InterPro" id="IPR009071">
    <property type="entry name" value="HMG_box_dom"/>
</dbReference>
<dbReference type="InterPro" id="IPR036910">
    <property type="entry name" value="HMG_box_dom_sf"/>
</dbReference>
<dbReference type="InterPro" id="IPR022151">
    <property type="entry name" value="Sox_N"/>
</dbReference>
<dbReference type="InterPro" id="IPR050917">
    <property type="entry name" value="SOX_TF"/>
</dbReference>
<dbReference type="PANTHER" id="PTHR45803">
    <property type="entry name" value="SOX100B"/>
    <property type="match status" value="1"/>
</dbReference>
<dbReference type="PANTHER" id="PTHR45803:SF1">
    <property type="entry name" value="TRANSCRIPTION FACTOR SOX-9"/>
    <property type="match status" value="1"/>
</dbReference>
<dbReference type="Pfam" id="PF00505">
    <property type="entry name" value="HMG_box"/>
    <property type="match status" value="1"/>
</dbReference>
<dbReference type="Pfam" id="PF12444">
    <property type="entry name" value="Sox_N"/>
    <property type="match status" value="1"/>
</dbReference>
<dbReference type="SMART" id="SM00398">
    <property type="entry name" value="HMG"/>
    <property type="match status" value="1"/>
</dbReference>
<dbReference type="SUPFAM" id="SSF47095">
    <property type="entry name" value="HMG-box"/>
    <property type="match status" value="1"/>
</dbReference>
<dbReference type="PROSITE" id="PS50118">
    <property type="entry name" value="HMG_BOX_2"/>
    <property type="match status" value="1"/>
</dbReference>
<comment type="function">
    <text evidence="3">Transcription factor that plays a key role in chondrocytes differentiation and skeletal development. Specifically binds the 5'-ACAAAG-3' DNA motif present in enhancers and super-enhancers and promotes expression of genes important for chondrogenesis, including COL2A1. Plays a central role in successive steps of chondrocyte differentiation. Absolutely required for precartilaginous condensation, the first step in chondrogenesis during which skeletal progenitors differentiate into prechondrocytes. Together with SOX5 and SOX6, required for overt chondrogenesis when condensed prechondrocytes differentiate into early stage chondrocytes, the second step in chondrogenesis. Later, required to direct hypertrophic maturation and block osteoblast differentiation of growth plate chondrocytes: maintains chondrocyte columnar proliferation, delays prehypertrophy and then prevents osteoblastic differentiation of chondrocytes. Also required for chondrocyte hypertrophy, both indirectly, by keeping the lineage fate of chondrocytes, and directly, by remaining present in upper hypertrophic cells. Low lipid levels are the main nutritional determinant for chondrogenic commitment of skeletal progenitor cells: when lipids levels are low, FOXO transcription factors promote expression of SOX9, which induces chondrogenic commitment and suppresses fatty acid oxidation. In addition to cartilage development, also acts as a regulator of proliferation and differentiation in epithelial stem/progenitor cells.</text>
</comment>
<comment type="subunit">
    <text evidence="1">Interacts with the sumoylation factors ube2i/ubc9 and sumo1.</text>
</comment>
<comment type="subcellular location">
    <subcellularLocation>
        <location evidence="1 4 5">Nucleus</location>
    </subcellularLocation>
    <subcellularLocation>
        <location evidence="1 4">Cytoplasm</location>
    </subcellularLocation>
    <text evidence="1 4">Restricted to the nucleus of Sertoli-like cells in the testis, but localizes to the cytoplasm of previtellogenic oocytes in the ovary before being translocated into the nucleus of vitellogenic oocytes.</text>
</comment>
<comment type="domain">
    <text evidence="2">The 9aaTAD motif is a transactivation domain present in a large number of yeast and animal transcription factors.</text>
</comment>
<comment type="PTM">
    <text evidence="1">Sumoylated. Lys-364 is the major site of sumoylation, although sumoylation at Lys-61 also occurs. Sumoylation plays a key role in regulating formation of the neural crest and otic placode (By similarity).</text>
</comment>
<feature type="chain" id="PRO_0000377416" description="Transcription factor Sox-9-B">
    <location>
        <begin position="1"/>
        <end position="476"/>
    </location>
</feature>
<feature type="DNA-binding region" description="HMG box" evidence="5">
    <location>
        <begin position="105"/>
        <end position="173"/>
    </location>
</feature>
<feature type="region of interest" description="Disordered" evidence="6">
    <location>
        <begin position="1"/>
        <end position="67"/>
    </location>
</feature>
<feature type="region of interest" description="Disordered" evidence="6">
    <location>
        <begin position="157"/>
        <end position="197"/>
    </location>
</feature>
<feature type="region of interest" description="Disordered" evidence="6">
    <location>
        <begin position="209"/>
        <end position="274"/>
    </location>
</feature>
<feature type="region of interest" description="Disordered" evidence="6">
    <location>
        <begin position="318"/>
        <end position="383"/>
    </location>
</feature>
<feature type="region of interest" description="Disordered" evidence="6">
    <location>
        <begin position="443"/>
        <end position="476"/>
    </location>
</feature>
<feature type="short sequence motif" description="9aaTAD 1" evidence="2">
    <location>
        <begin position="276"/>
        <end position="285"/>
    </location>
</feature>
<feature type="short sequence motif" description="9aaTAD 2" evidence="2">
    <location>
        <begin position="291"/>
        <end position="299"/>
    </location>
</feature>
<feature type="short sequence motif" description="9aaTAD 3" evidence="2">
    <location>
        <begin position="427"/>
        <end position="435"/>
    </location>
</feature>
<feature type="compositionally biased region" description="Low complexity" evidence="6">
    <location>
        <begin position="30"/>
        <end position="41"/>
    </location>
</feature>
<feature type="compositionally biased region" description="Polar residues" evidence="6">
    <location>
        <begin position="42"/>
        <end position="52"/>
    </location>
</feature>
<feature type="compositionally biased region" description="Basic and acidic residues" evidence="6">
    <location>
        <begin position="56"/>
        <end position="67"/>
    </location>
</feature>
<feature type="compositionally biased region" description="Basic and acidic residues" evidence="6">
    <location>
        <begin position="157"/>
        <end position="174"/>
    </location>
</feature>
<feature type="compositionally biased region" description="Polar residues" evidence="6">
    <location>
        <begin position="211"/>
        <end position="220"/>
    </location>
</feature>
<feature type="compositionally biased region" description="Low complexity" evidence="6">
    <location>
        <begin position="319"/>
        <end position="344"/>
    </location>
</feature>
<feature type="compositionally biased region" description="Polar residues" evidence="6">
    <location>
        <begin position="345"/>
        <end position="360"/>
    </location>
</feature>
<feature type="compositionally biased region" description="Low complexity" evidence="6">
    <location>
        <begin position="369"/>
        <end position="383"/>
    </location>
</feature>
<feature type="compositionally biased region" description="Polar residues" evidence="6">
    <location>
        <begin position="452"/>
        <end position="476"/>
    </location>
</feature>
<feature type="cross-link" description="Glycyl lysine isopeptide (Lys-Gly) (interchain with G-Cter in SUMO)" evidence="1">
    <location>
        <position position="61"/>
    </location>
</feature>
<feature type="cross-link" description="Glycyl lysine isopeptide (Lys-Gly) (interchain with G-Cter in SUMO)" evidence="1">
    <location>
        <position position="364"/>
    </location>
</feature>
<accession>Q6DFF5</accession>
<name>SOX9B_XENLA</name>
<proteinExistence type="evidence at transcript level"/>